<comment type="function">
    <text evidence="1">This enzyme is involved in nucleotide metabolism: it produces dUMP, the immediate precursor of thymidine nucleotides and it decreases the intracellular concentration of dUTP so that uracil cannot be incorporated into DNA.</text>
</comment>
<comment type="catalytic activity">
    <reaction evidence="1">
        <text>dUTP + H2O = dUMP + diphosphate + H(+)</text>
        <dbReference type="Rhea" id="RHEA:10248"/>
        <dbReference type="ChEBI" id="CHEBI:15377"/>
        <dbReference type="ChEBI" id="CHEBI:15378"/>
        <dbReference type="ChEBI" id="CHEBI:33019"/>
        <dbReference type="ChEBI" id="CHEBI:61555"/>
        <dbReference type="ChEBI" id="CHEBI:246422"/>
        <dbReference type="EC" id="3.6.1.23"/>
    </reaction>
</comment>
<comment type="cofactor">
    <cofactor evidence="1">
        <name>Mg(2+)</name>
        <dbReference type="ChEBI" id="CHEBI:18420"/>
    </cofactor>
</comment>
<comment type="pathway">
    <text evidence="1">Pyrimidine metabolism; dUMP biosynthesis; dUMP from dCTP (dUTP route): step 2/2.</text>
</comment>
<comment type="similarity">
    <text evidence="1">Belongs to the dUTPase family.</text>
</comment>
<dbReference type="EC" id="3.6.1.23" evidence="1"/>
<dbReference type="EMBL" id="AP009384">
    <property type="protein sequence ID" value="BAF86705.1"/>
    <property type="molecule type" value="Genomic_DNA"/>
</dbReference>
<dbReference type="RefSeq" id="WP_012169238.1">
    <property type="nucleotide sequence ID" value="NC_009937.1"/>
</dbReference>
<dbReference type="SMR" id="A8IPW5"/>
<dbReference type="STRING" id="438753.AZC_0707"/>
<dbReference type="KEGG" id="azc:AZC_0707"/>
<dbReference type="eggNOG" id="COG0756">
    <property type="taxonomic scope" value="Bacteria"/>
</dbReference>
<dbReference type="HOGENOM" id="CLU_068508_1_2_5"/>
<dbReference type="UniPathway" id="UPA00610">
    <property type="reaction ID" value="UER00666"/>
</dbReference>
<dbReference type="Proteomes" id="UP000000270">
    <property type="component" value="Chromosome"/>
</dbReference>
<dbReference type="GO" id="GO:0004170">
    <property type="term" value="F:dUTP diphosphatase activity"/>
    <property type="evidence" value="ECO:0007669"/>
    <property type="project" value="UniProtKB-UniRule"/>
</dbReference>
<dbReference type="GO" id="GO:0000287">
    <property type="term" value="F:magnesium ion binding"/>
    <property type="evidence" value="ECO:0007669"/>
    <property type="project" value="UniProtKB-UniRule"/>
</dbReference>
<dbReference type="GO" id="GO:0006226">
    <property type="term" value="P:dUMP biosynthetic process"/>
    <property type="evidence" value="ECO:0007669"/>
    <property type="project" value="UniProtKB-UniRule"/>
</dbReference>
<dbReference type="GO" id="GO:0046081">
    <property type="term" value="P:dUTP catabolic process"/>
    <property type="evidence" value="ECO:0007669"/>
    <property type="project" value="InterPro"/>
</dbReference>
<dbReference type="CDD" id="cd07557">
    <property type="entry name" value="trimeric_dUTPase"/>
    <property type="match status" value="1"/>
</dbReference>
<dbReference type="Gene3D" id="2.70.40.10">
    <property type="match status" value="1"/>
</dbReference>
<dbReference type="HAMAP" id="MF_00116">
    <property type="entry name" value="dUTPase_bact"/>
    <property type="match status" value="1"/>
</dbReference>
<dbReference type="InterPro" id="IPR008181">
    <property type="entry name" value="dUTPase"/>
</dbReference>
<dbReference type="InterPro" id="IPR029054">
    <property type="entry name" value="dUTPase-like"/>
</dbReference>
<dbReference type="InterPro" id="IPR036157">
    <property type="entry name" value="dUTPase-like_sf"/>
</dbReference>
<dbReference type="InterPro" id="IPR033704">
    <property type="entry name" value="dUTPase_trimeric"/>
</dbReference>
<dbReference type="NCBIfam" id="TIGR00576">
    <property type="entry name" value="dut"/>
    <property type="match status" value="1"/>
</dbReference>
<dbReference type="NCBIfam" id="NF001862">
    <property type="entry name" value="PRK00601.1"/>
    <property type="match status" value="1"/>
</dbReference>
<dbReference type="PANTHER" id="PTHR11241">
    <property type="entry name" value="DEOXYURIDINE 5'-TRIPHOSPHATE NUCLEOTIDOHYDROLASE"/>
    <property type="match status" value="1"/>
</dbReference>
<dbReference type="PANTHER" id="PTHR11241:SF0">
    <property type="entry name" value="DEOXYURIDINE 5'-TRIPHOSPHATE NUCLEOTIDOHYDROLASE"/>
    <property type="match status" value="1"/>
</dbReference>
<dbReference type="Pfam" id="PF00692">
    <property type="entry name" value="dUTPase"/>
    <property type="match status" value="1"/>
</dbReference>
<dbReference type="SUPFAM" id="SSF51283">
    <property type="entry name" value="dUTPase-like"/>
    <property type="match status" value="1"/>
</dbReference>
<sequence length="157" mass="16233">MSATRLDVPVVRLPHGMDLPLPEYATAASAGMDLVAAVPAEVPLVIAPGAWALVPTGLALELPEGMEAQVRPRSGLALKFGVTVLNAPGTIDADYRGEVGVILINHGREPFTVSRGMRIAQMVIAGVQQITLVETGNLGETARGVGGFGSTGLDRTP</sequence>
<gene>
    <name evidence="1" type="primary">dut</name>
    <name type="ordered locus">AZC_0707</name>
</gene>
<name>DUT_AZOC5</name>
<proteinExistence type="inferred from homology"/>
<reference key="1">
    <citation type="submission" date="2007-04" db="EMBL/GenBank/DDBJ databases">
        <title>Complete genome sequence of the nitrogen-fixing bacterium Azorhizobium caulinodans ORS571.</title>
        <authorList>
            <person name="Lee K.B."/>
            <person name="Backer P.D."/>
            <person name="Aono T."/>
            <person name="Liu C.T."/>
            <person name="Suzuki S."/>
            <person name="Suzuki T."/>
            <person name="Kaneko T."/>
            <person name="Yamada M."/>
            <person name="Tabata S."/>
            <person name="Kupfer D.M."/>
            <person name="Najar F.Z."/>
            <person name="Wiley G.B."/>
            <person name="Roe B."/>
            <person name="Binnewies T."/>
            <person name="Ussery D."/>
            <person name="Vereecke D."/>
            <person name="Gevers D."/>
            <person name="Holsters M."/>
            <person name="Oyaizu H."/>
        </authorList>
    </citation>
    <scope>NUCLEOTIDE SEQUENCE [LARGE SCALE GENOMIC DNA]</scope>
    <source>
        <strain>ATCC 43989 / DSM 5975 / JCM 20966 / LMG 6465 / NBRC 14845 / NCIMB 13405 / ORS 571</strain>
    </source>
</reference>
<organism>
    <name type="scientific">Azorhizobium caulinodans (strain ATCC 43989 / DSM 5975 / JCM 20966 / LMG 6465 / NBRC 14845 / NCIMB 13405 / ORS 571)</name>
    <dbReference type="NCBI Taxonomy" id="438753"/>
    <lineage>
        <taxon>Bacteria</taxon>
        <taxon>Pseudomonadati</taxon>
        <taxon>Pseudomonadota</taxon>
        <taxon>Alphaproteobacteria</taxon>
        <taxon>Hyphomicrobiales</taxon>
        <taxon>Xanthobacteraceae</taxon>
        <taxon>Azorhizobium</taxon>
    </lineage>
</organism>
<protein>
    <recommendedName>
        <fullName evidence="1">Deoxyuridine 5'-triphosphate nucleotidohydrolase</fullName>
        <shortName evidence="1">dUTPase</shortName>
        <ecNumber evidence="1">3.6.1.23</ecNumber>
    </recommendedName>
    <alternativeName>
        <fullName evidence="1">dUTP pyrophosphatase</fullName>
    </alternativeName>
</protein>
<accession>A8IPW5</accession>
<keyword id="KW-0378">Hydrolase</keyword>
<keyword id="KW-0460">Magnesium</keyword>
<keyword id="KW-0479">Metal-binding</keyword>
<keyword id="KW-0546">Nucleotide metabolism</keyword>
<keyword id="KW-1185">Reference proteome</keyword>
<feature type="chain" id="PRO_1000071353" description="Deoxyuridine 5'-triphosphate nucleotidohydrolase">
    <location>
        <begin position="1"/>
        <end position="157"/>
    </location>
</feature>
<feature type="binding site" evidence="1">
    <location>
        <begin position="73"/>
        <end position="75"/>
    </location>
    <ligand>
        <name>substrate</name>
    </ligand>
</feature>
<feature type="binding site" evidence="1">
    <location>
        <position position="86"/>
    </location>
    <ligand>
        <name>substrate</name>
    </ligand>
</feature>
<feature type="binding site" evidence="1">
    <location>
        <begin position="90"/>
        <end position="92"/>
    </location>
    <ligand>
        <name>substrate</name>
    </ligand>
</feature>
<evidence type="ECO:0000255" key="1">
    <source>
        <dbReference type="HAMAP-Rule" id="MF_00116"/>
    </source>
</evidence>